<keyword id="KW-0067">ATP-binding</keyword>
<keyword id="KW-0317">Glutathione biosynthesis</keyword>
<keyword id="KW-0436">Ligase</keyword>
<keyword id="KW-0547">Nucleotide-binding</keyword>
<reference key="1">
    <citation type="submission" date="2008-01" db="EMBL/GenBank/DDBJ databases">
        <title>Complete sequence of Shewanella halifaxensis HAW-EB4.</title>
        <authorList>
            <consortium name="US DOE Joint Genome Institute"/>
            <person name="Copeland A."/>
            <person name="Lucas S."/>
            <person name="Lapidus A."/>
            <person name="Glavina del Rio T."/>
            <person name="Dalin E."/>
            <person name="Tice H."/>
            <person name="Bruce D."/>
            <person name="Goodwin L."/>
            <person name="Pitluck S."/>
            <person name="Sims D."/>
            <person name="Brettin T."/>
            <person name="Detter J.C."/>
            <person name="Han C."/>
            <person name="Kuske C.R."/>
            <person name="Schmutz J."/>
            <person name="Larimer F."/>
            <person name="Land M."/>
            <person name="Hauser L."/>
            <person name="Kyrpides N."/>
            <person name="Kim E."/>
            <person name="Zhao J.-S."/>
            <person name="Richardson P."/>
        </authorList>
    </citation>
    <scope>NUCLEOTIDE SEQUENCE [LARGE SCALE GENOMIC DNA]</scope>
    <source>
        <strain>HAW-EB4</strain>
    </source>
</reference>
<organism>
    <name type="scientific">Shewanella halifaxensis (strain HAW-EB4)</name>
    <dbReference type="NCBI Taxonomy" id="458817"/>
    <lineage>
        <taxon>Bacteria</taxon>
        <taxon>Pseudomonadati</taxon>
        <taxon>Pseudomonadota</taxon>
        <taxon>Gammaproteobacteria</taxon>
        <taxon>Alteromonadales</taxon>
        <taxon>Shewanellaceae</taxon>
        <taxon>Shewanella</taxon>
    </lineage>
</organism>
<comment type="catalytic activity">
    <reaction evidence="1">
        <text>L-cysteine + L-glutamate + ATP = gamma-L-glutamyl-L-cysteine + ADP + phosphate + H(+)</text>
        <dbReference type="Rhea" id="RHEA:13285"/>
        <dbReference type="ChEBI" id="CHEBI:15378"/>
        <dbReference type="ChEBI" id="CHEBI:29985"/>
        <dbReference type="ChEBI" id="CHEBI:30616"/>
        <dbReference type="ChEBI" id="CHEBI:35235"/>
        <dbReference type="ChEBI" id="CHEBI:43474"/>
        <dbReference type="ChEBI" id="CHEBI:58173"/>
        <dbReference type="ChEBI" id="CHEBI:456216"/>
        <dbReference type="EC" id="6.3.2.2"/>
    </reaction>
</comment>
<comment type="pathway">
    <text evidence="1">Sulfur metabolism; glutathione biosynthesis; glutathione from L-cysteine and L-glutamate: step 1/2.</text>
</comment>
<comment type="similarity">
    <text evidence="1">Belongs to the glutamate--cysteine ligase type 1 family. Type 1 subfamily.</text>
</comment>
<proteinExistence type="inferred from homology"/>
<dbReference type="EC" id="6.3.2.2" evidence="1"/>
<dbReference type="EMBL" id="CP000931">
    <property type="protein sequence ID" value="ABZ75810.1"/>
    <property type="molecule type" value="Genomic_DNA"/>
</dbReference>
<dbReference type="RefSeq" id="WP_012276351.1">
    <property type="nucleotide sequence ID" value="NC_010334.1"/>
</dbReference>
<dbReference type="SMR" id="B0TK23"/>
<dbReference type="STRING" id="458817.Shal_1241"/>
<dbReference type="KEGG" id="shl:Shal_1241"/>
<dbReference type="eggNOG" id="COG2918">
    <property type="taxonomic scope" value="Bacteria"/>
</dbReference>
<dbReference type="HOGENOM" id="CLU_020728_3_0_6"/>
<dbReference type="OrthoDB" id="9803907at2"/>
<dbReference type="UniPathway" id="UPA00142">
    <property type="reaction ID" value="UER00209"/>
</dbReference>
<dbReference type="Proteomes" id="UP000001317">
    <property type="component" value="Chromosome"/>
</dbReference>
<dbReference type="GO" id="GO:0005829">
    <property type="term" value="C:cytosol"/>
    <property type="evidence" value="ECO:0007669"/>
    <property type="project" value="TreeGrafter"/>
</dbReference>
<dbReference type="GO" id="GO:0005524">
    <property type="term" value="F:ATP binding"/>
    <property type="evidence" value="ECO:0007669"/>
    <property type="project" value="UniProtKB-KW"/>
</dbReference>
<dbReference type="GO" id="GO:0004357">
    <property type="term" value="F:glutamate-cysteine ligase activity"/>
    <property type="evidence" value="ECO:0007669"/>
    <property type="project" value="UniProtKB-UniRule"/>
</dbReference>
<dbReference type="GO" id="GO:0046872">
    <property type="term" value="F:metal ion binding"/>
    <property type="evidence" value="ECO:0007669"/>
    <property type="project" value="TreeGrafter"/>
</dbReference>
<dbReference type="GO" id="GO:0006750">
    <property type="term" value="P:glutathione biosynthetic process"/>
    <property type="evidence" value="ECO:0007669"/>
    <property type="project" value="UniProtKB-UniRule"/>
</dbReference>
<dbReference type="Gene3D" id="3.30.590.20">
    <property type="match status" value="1"/>
</dbReference>
<dbReference type="HAMAP" id="MF_00578">
    <property type="entry name" value="Glu_cys_ligase"/>
    <property type="match status" value="1"/>
</dbReference>
<dbReference type="InterPro" id="IPR014746">
    <property type="entry name" value="Gln_synth/guanido_kin_cat_dom"/>
</dbReference>
<dbReference type="InterPro" id="IPR007370">
    <property type="entry name" value="Glu_cys_ligase"/>
</dbReference>
<dbReference type="InterPro" id="IPR006334">
    <property type="entry name" value="Glut_cys_ligase"/>
</dbReference>
<dbReference type="NCBIfam" id="TIGR01434">
    <property type="entry name" value="glu_cys_ligase"/>
    <property type="match status" value="1"/>
</dbReference>
<dbReference type="PANTHER" id="PTHR38761">
    <property type="entry name" value="GLUTAMATE--CYSTEINE LIGASE"/>
    <property type="match status" value="1"/>
</dbReference>
<dbReference type="PANTHER" id="PTHR38761:SF1">
    <property type="entry name" value="GLUTAMATE--CYSTEINE LIGASE"/>
    <property type="match status" value="1"/>
</dbReference>
<dbReference type="Pfam" id="PF04262">
    <property type="entry name" value="Glu_cys_ligase"/>
    <property type="match status" value="1"/>
</dbReference>
<dbReference type="SUPFAM" id="SSF55931">
    <property type="entry name" value="Glutamine synthetase/guanido kinase"/>
    <property type="match status" value="1"/>
</dbReference>
<gene>
    <name evidence="1" type="primary">gshA</name>
    <name type="ordered locus">Shal_1241</name>
</gene>
<evidence type="ECO:0000255" key="1">
    <source>
        <dbReference type="HAMAP-Rule" id="MF_00578"/>
    </source>
</evidence>
<accession>B0TK23</accession>
<protein>
    <recommendedName>
        <fullName evidence="1">Glutamate--cysteine ligase</fullName>
        <ecNumber evidence="1">6.3.2.2</ecNumber>
    </recommendedName>
    <alternativeName>
        <fullName evidence="1">Gamma-ECS</fullName>
        <shortName evidence="1">GCS</shortName>
    </alternativeName>
    <alternativeName>
        <fullName evidence="1">Gamma-glutamylcysteine synthetase</fullName>
    </alternativeName>
</protein>
<sequence>MKPFNELVGKLSDAASRQALKSMHRGIEREALRIEKSGHLALDKHPKALGSALMHSRITTDYSESLLEFITPVFEDIDELVEDLTLTHAYSVRHLNGQRLWPVSMPCYLGDAGDIPIADYGSSNTGQMKRLYRKGLTYRYGAQMQIISGVHFNFSVSDQLWNRLYELSDTSLSLEEFISESYFGLIRNYRRLVWVLPYLFGASPALCSTFIQDPKTNEFPFEVIGNGTLYLPYATSLRMSDLGYTNQEQDNLNISYNSLACYLEGMKSAINMPSAKFAKIGVKVDGEYRQLNANILQIENEFYSPIRAKRVAKGNEKPSESLARAGVEYIEVRALDVNPYSAVGIEKSQIRFLDLFLLNCLLQPSPASDASEEAEIAANLQAVVLEGRKPGLKLTRAGEEVSLSGWLESLFGNLNDIAKLLDDEGQDDYQVALAKWQKAVNDPDATLSGQIIKGLKDNQIDHGDWVLQLAEQYHQELKGYPLSEAVTMRYEQDAQASLEKQARLEAEPSVSFDDFLADYFKA</sequence>
<name>GSH1_SHEHH</name>
<feature type="chain" id="PRO_1000082361" description="Glutamate--cysteine ligase">
    <location>
        <begin position="1"/>
        <end position="522"/>
    </location>
</feature>